<feature type="chain" id="PRO_1000115691" description="Glutaminase">
    <location>
        <begin position="1"/>
        <end position="306"/>
    </location>
</feature>
<feature type="binding site" evidence="1">
    <location>
        <position position="64"/>
    </location>
    <ligand>
        <name>substrate</name>
    </ligand>
</feature>
<feature type="binding site" evidence="1">
    <location>
        <position position="115"/>
    </location>
    <ligand>
        <name>substrate</name>
    </ligand>
</feature>
<feature type="binding site" evidence="1">
    <location>
        <position position="159"/>
    </location>
    <ligand>
        <name>substrate</name>
    </ligand>
</feature>
<feature type="binding site" evidence="1">
    <location>
        <position position="166"/>
    </location>
    <ligand>
        <name>substrate</name>
    </ligand>
</feature>
<feature type="binding site" evidence="1">
    <location>
        <position position="190"/>
    </location>
    <ligand>
        <name>substrate</name>
    </ligand>
</feature>
<feature type="binding site" evidence="1">
    <location>
        <position position="242"/>
    </location>
    <ligand>
        <name>substrate</name>
    </ligand>
</feature>
<feature type="binding site" evidence="1">
    <location>
        <position position="260"/>
    </location>
    <ligand>
        <name>substrate</name>
    </ligand>
</feature>
<keyword id="KW-0378">Hydrolase</keyword>
<dbReference type="EC" id="3.5.1.2" evidence="1"/>
<dbReference type="EMBL" id="FM178379">
    <property type="protein sequence ID" value="CAQ78221.1"/>
    <property type="molecule type" value="Genomic_DNA"/>
</dbReference>
<dbReference type="RefSeq" id="WP_012549345.1">
    <property type="nucleotide sequence ID" value="NC_011312.1"/>
</dbReference>
<dbReference type="SMR" id="B6EMU2"/>
<dbReference type="KEGG" id="vsa:VSAL_I0536"/>
<dbReference type="eggNOG" id="COG2066">
    <property type="taxonomic scope" value="Bacteria"/>
</dbReference>
<dbReference type="HOGENOM" id="CLU_027932_1_1_6"/>
<dbReference type="Proteomes" id="UP000001730">
    <property type="component" value="Chromosome 1"/>
</dbReference>
<dbReference type="GO" id="GO:0004359">
    <property type="term" value="F:glutaminase activity"/>
    <property type="evidence" value="ECO:0007669"/>
    <property type="project" value="UniProtKB-UniRule"/>
</dbReference>
<dbReference type="GO" id="GO:0006537">
    <property type="term" value="P:glutamate biosynthetic process"/>
    <property type="evidence" value="ECO:0007669"/>
    <property type="project" value="TreeGrafter"/>
</dbReference>
<dbReference type="GO" id="GO:0006543">
    <property type="term" value="P:glutamine catabolic process"/>
    <property type="evidence" value="ECO:0007669"/>
    <property type="project" value="TreeGrafter"/>
</dbReference>
<dbReference type="FunFam" id="3.40.710.10:FF:000005">
    <property type="entry name" value="Glutaminase"/>
    <property type="match status" value="1"/>
</dbReference>
<dbReference type="Gene3D" id="3.40.710.10">
    <property type="entry name" value="DD-peptidase/beta-lactamase superfamily"/>
    <property type="match status" value="1"/>
</dbReference>
<dbReference type="HAMAP" id="MF_00313">
    <property type="entry name" value="Glutaminase"/>
    <property type="match status" value="1"/>
</dbReference>
<dbReference type="InterPro" id="IPR012338">
    <property type="entry name" value="Beta-lactam/transpept-like"/>
</dbReference>
<dbReference type="InterPro" id="IPR015868">
    <property type="entry name" value="Glutaminase"/>
</dbReference>
<dbReference type="NCBIfam" id="TIGR03814">
    <property type="entry name" value="Gln_ase"/>
    <property type="match status" value="1"/>
</dbReference>
<dbReference type="NCBIfam" id="NF002132">
    <property type="entry name" value="PRK00971.1-1"/>
    <property type="match status" value="1"/>
</dbReference>
<dbReference type="NCBIfam" id="NF002133">
    <property type="entry name" value="PRK00971.1-2"/>
    <property type="match status" value="1"/>
</dbReference>
<dbReference type="PANTHER" id="PTHR12544">
    <property type="entry name" value="GLUTAMINASE"/>
    <property type="match status" value="1"/>
</dbReference>
<dbReference type="PANTHER" id="PTHR12544:SF29">
    <property type="entry name" value="GLUTAMINASE"/>
    <property type="match status" value="1"/>
</dbReference>
<dbReference type="Pfam" id="PF04960">
    <property type="entry name" value="Glutaminase"/>
    <property type="match status" value="1"/>
</dbReference>
<dbReference type="SUPFAM" id="SSF56601">
    <property type="entry name" value="beta-lactamase/transpeptidase-like"/>
    <property type="match status" value="1"/>
</dbReference>
<name>GLSA_ALISL</name>
<organism>
    <name type="scientific">Aliivibrio salmonicida (strain LFI1238)</name>
    <name type="common">Vibrio salmonicida (strain LFI1238)</name>
    <dbReference type="NCBI Taxonomy" id="316275"/>
    <lineage>
        <taxon>Bacteria</taxon>
        <taxon>Pseudomonadati</taxon>
        <taxon>Pseudomonadota</taxon>
        <taxon>Gammaproteobacteria</taxon>
        <taxon>Vibrionales</taxon>
        <taxon>Vibrionaceae</taxon>
        <taxon>Aliivibrio</taxon>
    </lineage>
</organism>
<comment type="catalytic activity">
    <reaction evidence="1">
        <text>L-glutamine + H2O = L-glutamate + NH4(+)</text>
        <dbReference type="Rhea" id="RHEA:15889"/>
        <dbReference type="ChEBI" id="CHEBI:15377"/>
        <dbReference type="ChEBI" id="CHEBI:28938"/>
        <dbReference type="ChEBI" id="CHEBI:29985"/>
        <dbReference type="ChEBI" id="CHEBI:58359"/>
        <dbReference type="EC" id="3.5.1.2"/>
    </reaction>
</comment>
<comment type="subunit">
    <text evidence="1">Homotetramer.</text>
</comment>
<comment type="similarity">
    <text evidence="1">Belongs to the glutaminase family.</text>
</comment>
<sequence>MKPTKQILEDILNEVRPLIGQGEVADYIPALACVPSNKLGIAVYTNDGEMITAGDANERFSIQSISKALSLTLAMELYQPEELWHRVGKEPSGQAFNSLIQLEMEQGVPRNPFINAGAIVVADMLFSRFSAPKHRLLEFVRKLSGNEHIIYDRVVANSEMDHSDRNASIAYLMRSFGNFENEVMPVLKNYFHACSLNMSCVDLAKTFGYLANKGIQPETNEFIITPMQSKQINALMATCGLYDGAGEFAYRVGMPGKSGVGGGIIAIVPGEMTIAVWSPELDPSGNSLAGTQALELLSERIGRSIF</sequence>
<proteinExistence type="inferred from homology"/>
<accession>B6EMU2</accession>
<evidence type="ECO:0000255" key="1">
    <source>
        <dbReference type="HAMAP-Rule" id="MF_00313"/>
    </source>
</evidence>
<reference key="1">
    <citation type="journal article" date="2008" name="BMC Genomics">
        <title>The genome sequence of the fish pathogen Aliivibrio salmonicida strain LFI1238 shows extensive evidence of gene decay.</title>
        <authorList>
            <person name="Hjerde E."/>
            <person name="Lorentzen M.S."/>
            <person name="Holden M.T."/>
            <person name="Seeger K."/>
            <person name="Paulsen S."/>
            <person name="Bason N."/>
            <person name="Churcher C."/>
            <person name="Harris D."/>
            <person name="Norbertczak H."/>
            <person name="Quail M.A."/>
            <person name="Sanders S."/>
            <person name="Thurston S."/>
            <person name="Parkhill J."/>
            <person name="Willassen N.P."/>
            <person name="Thomson N.R."/>
        </authorList>
    </citation>
    <scope>NUCLEOTIDE SEQUENCE [LARGE SCALE GENOMIC DNA]</scope>
    <source>
        <strain>LFI1238</strain>
    </source>
</reference>
<gene>
    <name evidence="1" type="primary">glsA</name>
    <name type="ordered locus">VSAL_I0536</name>
</gene>
<protein>
    <recommendedName>
        <fullName evidence="1">Glutaminase</fullName>
        <ecNumber evidence="1">3.5.1.2</ecNumber>
    </recommendedName>
</protein>